<organism>
    <name type="scientific">Xylella fastidiosa (strain Temecula1 / ATCC 700964)</name>
    <dbReference type="NCBI Taxonomy" id="183190"/>
    <lineage>
        <taxon>Bacteria</taxon>
        <taxon>Pseudomonadati</taxon>
        <taxon>Pseudomonadota</taxon>
        <taxon>Gammaproteobacteria</taxon>
        <taxon>Lysobacterales</taxon>
        <taxon>Lysobacteraceae</taxon>
        <taxon>Xylella</taxon>
    </lineage>
</organism>
<protein>
    <recommendedName>
        <fullName evidence="1">GTP cyclohydrolase FolE2</fullName>
        <ecNumber evidence="1">3.5.4.16</ecNumber>
    </recommendedName>
</protein>
<evidence type="ECO:0000255" key="1">
    <source>
        <dbReference type="HAMAP-Rule" id="MF_01527"/>
    </source>
</evidence>
<evidence type="ECO:0000305" key="2"/>
<sequence length="298" mass="32516">MSTSIPDVAVHDSPAIAAPLRWVGMDGIVVPVQLTTADGGQHVIGRARAQIDLPAMGVKGIHMSRLYRLLDTYAVEPLTPVGICGLLSAMVNSHADCASTAARVDWYFDWLRRVPALVSNDLSGWRGYPVWLRAEYSAGHVQFWLCVEVAYSSTCPCSAALARQMLADAFLQEHVEVSALSPETVADWLRSNGSYATPHSQRSLARIEVALTEQAVELGLPALVDCAERILSTPVQAAVRRVDEQAFARLNGANLMYVEDATRRLQHGLAIHYSAFRVHVRHLESLHPNDAVASTADE</sequence>
<comment type="function">
    <text evidence="1">Converts GTP to 7,8-dihydroneopterin triphosphate.</text>
</comment>
<comment type="catalytic activity">
    <reaction evidence="1">
        <text>GTP + H2O = 7,8-dihydroneopterin 3'-triphosphate + formate + H(+)</text>
        <dbReference type="Rhea" id="RHEA:17473"/>
        <dbReference type="ChEBI" id="CHEBI:15377"/>
        <dbReference type="ChEBI" id="CHEBI:15378"/>
        <dbReference type="ChEBI" id="CHEBI:15740"/>
        <dbReference type="ChEBI" id="CHEBI:37565"/>
        <dbReference type="ChEBI" id="CHEBI:58462"/>
        <dbReference type="EC" id="3.5.4.16"/>
    </reaction>
</comment>
<comment type="pathway">
    <text evidence="1">Cofactor biosynthesis; 7,8-dihydroneopterin triphosphate biosynthesis; 7,8-dihydroneopterin triphosphate from GTP: step 1/1.</text>
</comment>
<comment type="similarity">
    <text evidence="1">Belongs to the GTP cyclohydrolase IV family.</text>
</comment>
<comment type="sequence caution" evidence="2">
    <conflict type="erroneous initiation">
        <sequence resource="EMBL-CDS" id="AAO28649"/>
    </conflict>
</comment>
<reference key="1">
    <citation type="journal article" date="2003" name="J. Bacteriol.">
        <title>Comparative analyses of the complete genome sequences of Pierce's disease and citrus variegated chlorosis strains of Xylella fastidiosa.</title>
        <authorList>
            <person name="Van Sluys M.A."/>
            <person name="de Oliveira M.C."/>
            <person name="Monteiro-Vitorello C.B."/>
            <person name="Miyaki C.Y."/>
            <person name="Furlan L.R."/>
            <person name="Camargo L.E.A."/>
            <person name="da Silva A.C.R."/>
            <person name="Moon D.H."/>
            <person name="Takita M.A."/>
            <person name="Lemos E.G.M."/>
            <person name="Machado M.A."/>
            <person name="Ferro M.I.T."/>
            <person name="da Silva F.R."/>
            <person name="Goldman M.H.S."/>
            <person name="Goldman G.H."/>
            <person name="Lemos M.V.F."/>
            <person name="El-Dorry H."/>
            <person name="Tsai S.M."/>
            <person name="Carrer H."/>
            <person name="Carraro D.M."/>
            <person name="de Oliveira R.C."/>
            <person name="Nunes L.R."/>
            <person name="Siqueira W.J."/>
            <person name="Coutinho L.L."/>
            <person name="Kimura E.T."/>
            <person name="Ferro E.S."/>
            <person name="Harakava R."/>
            <person name="Kuramae E.E."/>
            <person name="Marino C.L."/>
            <person name="Giglioti E."/>
            <person name="Abreu I.L."/>
            <person name="Alves L.M.C."/>
            <person name="do Amaral A.M."/>
            <person name="Baia G.S."/>
            <person name="Blanco S.R."/>
            <person name="Brito M.S."/>
            <person name="Cannavan F.S."/>
            <person name="Celestino A.V."/>
            <person name="da Cunha A.F."/>
            <person name="Fenille R.C."/>
            <person name="Ferro J.A."/>
            <person name="Formighieri E.F."/>
            <person name="Kishi L.T."/>
            <person name="Leoni S.G."/>
            <person name="Oliveira A.R."/>
            <person name="Rosa V.E. Jr."/>
            <person name="Sassaki F.T."/>
            <person name="Sena J.A.D."/>
            <person name="de Souza A.A."/>
            <person name="Truffi D."/>
            <person name="Tsukumo F."/>
            <person name="Yanai G.M."/>
            <person name="Zaros L.G."/>
            <person name="Civerolo E.L."/>
            <person name="Simpson A.J.G."/>
            <person name="Almeida N.F. Jr."/>
            <person name="Setubal J.C."/>
            <person name="Kitajima J.P."/>
        </authorList>
    </citation>
    <scope>NUCLEOTIDE SEQUENCE [LARGE SCALE GENOMIC DNA]</scope>
    <source>
        <strain>Temecula1 / ATCC 700964</strain>
    </source>
</reference>
<accession>Q87DA5</accession>
<proteinExistence type="inferred from homology"/>
<dbReference type="EC" id="3.5.4.16" evidence="1"/>
<dbReference type="EMBL" id="AE009442">
    <property type="protein sequence ID" value="AAO28649.1"/>
    <property type="status" value="ALT_INIT"/>
    <property type="molecule type" value="Genomic_DNA"/>
</dbReference>
<dbReference type="SMR" id="Q87DA5"/>
<dbReference type="KEGG" id="xft:PD_0781"/>
<dbReference type="HOGENOM" id="CLU_062816_0_0_6"/>
<dbReference type="UniPathway" id="UPA00848">
    <property type="reaction ID" value="UER00151"/>
</dbReference>
<dbReference type="Proteomes" id="UP000002516">
    <property type="component" value="Chromosome"/>
</dbReference>
<dbReference type="GO" id="GO:0003934">
    <property type="term" value="F:GTP cyclohydrolase I activity"/>
    <property type="evidence" value="ECO:0007669"/>
    <property type="project" value="UniProtKB-UniRule"/>
</dbReference>
<dbReference type="GO" id="GO:0046654">
    <property type="term" value="P:tetrahydrofolate biosynthetic process"/>
    <property type="evidence" value="ECO:0007669"/>
    <property type="project" value="UniProtKB-UniRule"/>
</dbReference>
<dbReference type="Gene3D" id="3.10.270.10">
    <property type="entry name" value="Urate Oxidase"/>
    <property type="match status" value="1"/>
</dbReference>
<dbReference type="HAMAP" id="MF_01527_B">
    <property type="entry name" value="GTP_cyclohydrol_B"/>
    <property type="match status" value="1"/>
</dbReference>
<dbReference type="InterPro" id="IPR022838">
    <property type="entry name" value="GTP_cyclohydrolase_FolE2"/>
</dbReference>
<dbReference type="InterPro" id="IPR003801">
    <property type="entry name" value="GTP_cyclohydrolase_FolE2/MptA"/>
</dbReference>
<dbReference type="NCBIfam" id="NF010200">
    <property type="entry name" value="PRK13674.1-1"/>
    <property type="match status" value="1"/>
</dbReference>
<dbReference type="PANTHER" id="PTHR36445">
    <property type="entry name" value="GTP CYCLOHYDROLASE MPTA"/>
    <property type="match status" value="1"/>
</dbReference>
<dbReference type="PANTHER" id="PTHR36445:SF1">
    <property type="entry name" value="GTP CYCLOHYDROLASE MPTA"/>
    <property type="match status" value="1"/>
</dbReference>
<dbReference type="Pfam" id="PF02649">
    <property type="entry name" value="GCHY-1"/>
    <property type="match status" value="1"/>
</dbReference>
<feature type="chain" id="PRO_0000147737" description="GTP cyclohydrolase FolE2">
    <location>
        <begin position="1"/>
        <end position="298"/>
    </location>
</feature>
<feature type="site" description="May be catalytically important" evidence="1">
    <location>
        <position position="155"/>
    </location>
</feature>
<gene>
    <name evidence="1" type="primary">folE2</name>
    <name type="ordered locus">PD_0781</name>
</gene>
<keyword id="KW-0378">Hydrolase</keyword>
<keyword id="KW-1185">Reference proteome</keyword>
<name>GCH4_XYLFT</name>